<name>SYE_CAUSK</name>
<gene>
    <name evidence="1" type="primary">gltX</name>
    <name type="ordered locus">Caul_2786</name>
</gene>
<reference key="1">
    <citation type="submission" date="2008-01" db="EMBL/GenBank/DDBJ databases">
        <title>Complete sequence of chromosome of Caulobacter sp. K31.</title>
        <authorList>
            <consortium name="US DOE Joint Genome Institute"/>
            <person name="Copeland A."/>
            <person name="Lucas S."/>
            <person name="Lapidus A."/>
            <person name="Barry K."/>
            <person name="Glavina del Rio T."/>
            <person name="Dalin E."/>
            <person name="Tice H."/>
            <person name="Pitluck S."/>
            <person name="Bruce D."/>
            <person name="Goodwin L."/>
            <person name="Thompson L.S."/>
            <person name="Brettin T."/>
            <person name="Detter J.C."/>
            <person name="Han C."/>
            <person name="Schmutz J."/>
            <person name="Larimer F."/>
            <person name="Land M."/>
            <person name="Hauser L."/>
            <person name="Kyrpides N."/>
            <person name="Kim E."/>
            <person name="Stephens C."/>
            <person name="Richardson P."/>
        </authorList>
    </citation>
    <scope>NUCLEOTIDE SEQUENCE [LARGE SCALE GENOMIC DNA]</scope>
    <source>
        <strain>K31</strain>
    </source>
</reference>
<evidence type="ECO:0000255" key="1">
    <source>
        <dbReference type="HAMAP-Rule" id="MF_00022"/>
    </source>
</evidence>
<proteinExistence type="inferred from homology"/>
<dbReference type="EC" id="6.1.1.17" evidence="1"/>
<dbReference type="EMBL" id="CP000927">
    <property type="protein sequence ID" value="ABZ71913.1"/>
    <property type="molecule type" value="Genomic_DNA"/>
</dbReference>
<dbReference type="SMR" id="B0SZ02"/>
<dbReference type="STRING" id="366602.Caul_2786"/>
<dbReference type="KEGG" id="cak:Caul_2786"/>
<dbReference type="eggNOG" id="COG0008">
    <property type="taxonomic scope" value="Bacteria"/>
</dbReference>
<dbReference type="HOGENOM" id="CLU_015768_6_3_5"/>
<dbReference type="OrthoDB" id="9807503at2"/>
<dbReference type="GO" id="GO:0005829">
    <property type="term" value="C:cytosol"/>
    <property type="evidence" value="ECO:0007669"/>
    <property type="project" value="TreeGrafter"/>
</dbReference>
<dbReference type="GO" id="GO:0005524">
    <property type="term" value="F:ATP binding"/>
    <property type="evidence" value="ECO:0007669"/>
    <property type="project" value="UniProtKB-UniRule"/>
</dbReference>
<dbReference type="GO" id="GO:0004818">
    <property type="term" value="F:glutamate-tRNA ligase activity"/>
    <property type="evidence" value="ECO:0007669"/>
    <property type="project" value="UniProtKB-UniRule"/>
</dbReference>
<dbReference type="GO" id="GO:0000049">
    <property type="term" value="F:tRNA binding"/>
    <property type="evidence" value="ECO:0007669"/>
    <property type="project" value="InterPro"/>
</dbReference>
<dbReference type="GO" id="GO:0008270">
    <property type="term" value="F:zinc ion binding"/>
    <property type="evidence" value="ECO:0007669"/>
    <property type="project" value="InterPro"/>
</dbReference>
<dbReference type="GO" id="GO:0006424">
    <property type="term" value="P:glutamyl-tRNA aminoacylation"/>
    <property type="evidence" value="ECO:0007669"/>
    <property type="project" value="UniProtKB-UniRule"/>
</dbReference>
<dbReference type="CDD" id="cd00808">
    <property type="entry name" value="GluRS_core"/>
    <property type="match status" value="1"/>
</dbReference>
<dbReference type="FunFam" id="3.40.50.620:FF:000007">
    <property type="entry name" value="Glutamate--tRNA ligase"/>
    <property type="match status" value="1"/>
</dbReference>
<dbReference type="Gene3D" id="1.10.10.350">
    <property type="match status" value="1"/>
</dbReference>
<dbReference type="Gene3D" id="3.40.50.620">
    <property type="entry name" value="HUPs"/>
    <property type="match status" value="1"/>
</dbReference>
<dbReference type="HAMAP" id="MF_00022">
    <property type="entry name" value="Glu_tRNA_synth_type1"/>
    <property type="match status" value="1"/>
</dbReference>
<dbReference type="InterPro" id="IPR045462">
    <property type="entry name" value="aa-tRNA-synth_I_cd-bd"/>
</dbReference>
<dbReference type="InterPro" id="IPR020751">
    <property type="entry name" value="aa-tRNA-synth_I_codon-bd_sub2"/>
</dbReference>
<dbReference type="InterPro" id="IPR001412">
    <property type="entry name" value="aa-tRNA-synth_I_CS"/>
</dbReference>
<dbReference type="InterPro" id="IPR008925">
    <property type="entry name" value="aa_tRNA-synth_I_cd-bd_sf"/>
</dbReference>
<dbReference type="InterPro" id="IPR004527">
    <property type="entry name" value="Glu-tRNA-ligase_bac/mito"/>
</dbReference>
<dbReference type="InterPro" id="IPR000924">
    <property type="entry name" value="Glu/Gln-tRNA-synth"/>
</dbReference>
<dbReference type="InterPro" id="IPR020058">
    <property type="entry name" value="Glu/Gln-tRNA-synth_Ib_cat-dom"/>
</dbReference>
<dbReference type="InterPro" id="IPR049940">
    <property type="entry name" value="GluQ/Sye"/>
</dbReference>
<dbReference type="InterPro" id="IPR033910">
    <property type="entry name" value="GluRS_core"/>
</dbReference>
<dbReference type="InterPro" id="IPR014729">
    <property type="entry name" value="Rossmann-like_a/b/a_fold"/>
</dbReference>
<dbReference type="NCBIfam" id="TIGR00464">
    <property type="entry name" value="gltX_bact"/>
    <property type="match status" value="1"/>
</dbReference>
<dbReference type="PANTHER" id="PTHR43311">
    <property type="entry name" value="GLUTAMATE--TRNA LIGASE"/>
    <property type="match status" value="1"/>
</dbReference>
<dbReference type="PANTHER" id="PTHR43311:SF2">
    <property type="entry name" value="GLUTAMATE--TRNA LIGASE, MITOCHONDRIAL-RELATED"/>
    <property type="match status" value="1"/>
</dbReference>
<dbReference type="Pfam" id="PF19269">
    <property type="entry name" value="Anticodon_2"/>
    <property type="match status" value="1"/>
</dbReference>
<dbReference type="Pfam" id="PF00749">
    <property type="entry name" value="tRNA-synt_1c"/>
    <property type="match status" value="1"/>
</dbReference>
<dbReference type="PRINTS" id="PR00987">
    <property type="entry name" value="TRNASYNTHGLU"/>
</dbReference>
<dbReference type="SUPFAM" id="SSF48163">
    <property type="entry name" value="An anticodon-binding domain of class I aminoacyl-tRNA synthetases"/>
    <property type="match status" value="1"/>
</dbReference>
<dbReference type="SUPFAM" id="SSF52374">
    <property type="entry name" value="Nucleotidylyl transferase"/>
    <property type="match status" value="1"/>
</dbReference>
<dbReference type="PROSITE" id="PS00178">
    <property type="entry name" value="AA_TRNA_LIGASE_I"/>
    <property type="match status" value="1"/>
</dbReference>
<feature type="chain" id="PRO_0000367644" description="Glutamate--tRNA ligase">
    <location>
        <begin position="1"/>
        <end position="474"/>
    </location>
</feature>
<feature type="short sequence motif" description="'HIGH' region" evidence="1">
    <location>
        <begin position="18"/>
        <end position="28"/>
    </location>
</feature>
<feature type="short sequence motif" description="'KMSKS' region" evidence="1">
    <location>
        <begin position="244"/>
        <end position="248"/>
    </location>
</feature>
<feature type="binding site" evidence="1">
    <location>
        <position position="247"/>
    </location>
    <ligand>
        <name>ATP</name>
        <dbReference type="ChEBI" id="CHEBI:30616"/>
    </ligand>
</feature>
<organism>
    <name type="scientific">Caulobacter sp. (strain K31)</name>
    <dbReference type="NCBI Taxonomy" id="366602"/>
    <lineage>
        <taxon>Bacteria</taxon>
        <taxon>Pseudomonadati</taxon>
        <taxon>Pseudomonadota</taxon>
        <taxon>Alphaproteobacteria</taxon>
        <taxon>Caulobacterales</taxon>
        <taxon>Caulobacteraceae</taxon>
        <taxon>Caulobacter</taxon>
    </lineage>
</organism>
<keyword id="KW-0030">Aminoacyl-tRNA synthetase</keyword>
<keyword id="KW-0067">ATP-binding</keyword>
<keyword id="KW-0963">Cytoplasm</keyword>
<keyword id="KW-0436">Ligase</keyword>
<keyword id="KW-0547">Nucleotide-binding</keyword>
<keyword id="KW-0648">Protein biosynthesis</keyword>
<accession>B0SZ02</accession>
<comment type="function">
    <text evidence="1">Catalyzes the attachment of glutamate to tRNA(Glu) in a two-step reaction: glutamate is first activated by ATP to form Glu-AMP and then transferred to the acceptor end of tRNA(Glu).</text>
</comment>
<comment type="catalytic activity">
    <reaction evidence="1">
        <text>tRNA(Glu) + L-glutamate + ATP = L-glutamyl-tRNA(Glu) + AMP + diphosphate</text>
        <dbReference type="Rhea" id="RHEA:23540"/>
        <dbReference type="Rhea" id="RHEA-COMP:9663"/>
        <dbReference type="Rhea" id="RHEA-COMP:9680"/>
        <dbReference type="ChEBI" id="CHEBI:29985"/>
        <dbReference type="ChEBI" id="CHEBI:30616"/>
        <dbReference type="ChEBI" id="CHEBI:33019"/>
        <dbReference type="ChEBI" id="CHEBI:78442"/>
        <dbReference type="ChEBI" id="CHEBI:78520"/>
        <dbReference type="ChEBI" id="CHEBI:456215"/>
        <dbReference type="EC" id="6.1.1.17"/>
    </reaction>
</comment>
<comment type="subunit">
    <text evidence="1">Monomer.</text>
</comment>
<comment type="subcellular location">
    <subcellularLocation>
        <location evidence="1">Cytoplasm</location>
    </subcellularLocation>
</comment>
<comment type="similarity">
    <text evidence="1">Belongs to the class-I aminoacyl-tRNA synthetase family. Glutamate--tRNA ligase type 1 subfamily.</text>
</comment>
<sequence>MTNSPAPTTSGVVTRFAPSPTGFLHIGGARTALFNWLYARHTGGKFLVRVEDTDRERSTQAAVAAIFEGLDWLGMKSDEEVVFQHKKADRHREAVQQLLDTGRAYRCWMSVEDLALAREAARAGGPALRSPWRDAPPPNDPTAPHVIRFKGPLDGTTLVDDLVKGPVTFDNAELDDLVLLRADGAPTYNLAVVVDDHDMGVTHVIRGDDHLNNAARQTLIYQAMGWTLPAFGHIPLIHGPDGAKLSKRHGAQAVGEFQDMGYLPEGLRNYLARLGWGHGDDEVFSDAQAIEWFDVKDVVKAPARLDWAKLNFINSQHLHVAEDGRLADLTLKALQAQGAPLPDDAPARLLATVPQVKVGAKTILELAEHCAFALKVRPLALEEKTRNQLTDETVDRLKRLRAQLGAVPVWGLSELEVLLKSFAESEGVGFGKFGPSLRGILTGGSQAPDLNKIMTALGREESLGRLDDALASRA</sequence>
<protein>
    <recommendedName>
        <fullName evidence="1">Glutamate--tRNA ligase</fullName>
        <ecNumber evidence="1">6.1.1.17</ecNumber>
    </recommendedName>
    <alternativeName>
        <fullName evidence="1">Glutamyl-tRNA synthetase</fullName>
        <shortName evidence="1">GluRS</shortName>
    </alternativeName>
</protein>